<keyword id="KW-1185">Reference proteome</keyword>
<keyword id="KW-0687">Ribonucleoprotein</keyword>
<keyword id="KW-0689">Ribosomal protein</keyword>
<comment type="similarity">
    <text evidence="1">Belongs to the eukaryotic ribosomal protein eS1 family.</text>
</comment>
<evidence type="ECO:0000255" key="1">
    <source>
        <dbReference type="HAMAP-Rule" id="MF_00359"/>
    </source>
</evidence>
<evidence type="ECO:0000305" key="2"/>
<sequence>MAKVNPRKRAAAAKDKWKLKDWYIVYAPEFFGNVEIGLTPADEPEKVKGRIIETTLRDVTGDFTKGHVKLYFRIHDVKGQNAYTKFKGHKLARSYIRSLVRRRTTRIDGIFNVTTKDGYKLRVMGMVIAIRRIQSSQERAVREVMEDLIRKKAEELTFTEFVLEAVNGKMGAELAREAKKIYPLKRAEIRKIKVLAEPEA</sequence>
<dbReference type="EMBL" id="CP001463">
    <property type="protein sequence ID" value="ACS90321.1"/>
    <property type="molecule type" value="Genomic_DNA"/>
</dbReference>
<dbReference type="RefSeq" id="WP_015849540.1">
    <property type="nucleotide sequence ID" value="NC_012883.1"/>
</dbReference>
<dbReference type="SMR" id="C6A3X6"/>
<dbReference type="STRING" id="604354.TSIB_1267"/>
<dbReference type="GeneID" id="8096266"/>
<dbReference type="KEGG" id="tsi:TSIB_1267"/>
<dbReference type="eggNOG" id="arCOG04186">
    <property type="taxonomic scope" value="Archaea"/>
</dbReference>
<dbReference type="HOGENOM" id="CLU_062507_1_0_2"/>
<dbReference type="OrthoDB" id="30639at2157"/>
<dbReference type="Proteomes" id="UP000009079">
    <property type="component" value="Chromosome"/>
</dbReference>
<dbReference type="GO" id="GO:1990904">
    <property type="term" value="C:ribonucleoprotein complex"/>
    <property type="evidence" value="ECO:0007669"/>
    <property type="project" value="UniProtKB-KW"/>
</dbReference>
<dbReference type="GO" id="GO:0005840">
    <property type="term" value="C:ribosome"/>
    <property type="evidence" value="ECO:0007669"/>
    <property type="project" value="UniProtKB-KW"/>
</dbReference>
<dbReference type="GO" id="GO:0003735">
    <property type="term" value="F:structural constituent of ribosome"/>
    <property type="evidence" value="ECO:0007669"/>
    <property type="project" value="InterPro"/>
</dbReference>
<dbReference type="GO" id="GO:0006412">
    <property type="term" value="P:translation"/>
    <property type="evidence" value="ECO:0007669"/>
    <property type="project" value="UniProtKB-UniRule"/>
</dbReference>
<dbReference type="HAMAP" id="MF_00359">
    <property type="entry name" value="Ribosomal_eS1"/>
    <property type="match status" value="1"/>
</dbReference>
<dbReference type="InterPro" id="IPR001593">
    <property type="entry name" value="Ribosomal_eS1"/>
</dbReference>
<dbReference type="InterPro" id="IPR030838">
    <property type="entry name" value="Ribosomal_eS1_arc"/>
</dbReference>
<dbReference type="InterPro" id="IPR018281">
    <property type="entry name" value="Ribosomal_eS1_CS"/>
</dbReference>
<dbReference type="NCBIfam" id="NF003142">
    <property type="entry name" value="PRK04057.1"/>
    <property type="match status" value="1"/>
</dbReference>
<dbReference type="PANTHER" id="PTHR11830">
    <property type="entry name" value="40S RIBOSOMAL PROTEIN S3A"/>
    <property type="match status" value="1"/>
</dbReference>
<dbReference type="Pfam" id="PF01015">
    <property type="entry name" value="Ribosomal_S3Ae"/>
    <property type="match status" value="1"/>
</dbReference>
<dbReference type="SMART" id="SM01397">
    <property type="entry name" value="Ribosomal_S3Ae"/>
    <property type="match status" value="1"/>
</dbReference>
<dbReference type="PROSITE" id="PS01191">
    <property type="entry name" value="RIBOSOMAL_S3AE"/>
    <property type="match status" value="1"/>
</dbReference>
<proteinExistence type="inferred from homology"/>
<organism>
    <name type="scientific">Thermococcus sibiricus (strain DSM 12597 / MM 739)</name>
    <dbReference type="NCBI Taxonomy" id="604354"/>
    <lineage>
        <taxon>Archaea</taxon>
        <taxon>Methanobacteriati</taxon>
        <taxon>Methanobacteriota</taxon>
        <taxon>Thermococci</taxon>
        <taxon>Thermococcales</taxon>
        <taxon>Thermococcaceae</taxon>
        <taxon>Thermococcus</taxon>
    </lineage>
</organism>
<name>RS3A_THESM</name>
<gene>
    <name evidence="1" type="primary">rps3ae</name>
    <name type="ordered locus">TSIB_1267</name>
</gene>
<accession>C6A3X6</accession>
<protein>
    <recommendedName>
        <fullName evidence="1">Small ribosomal subunit protein eS1</fullName>
    </recommendedName>
    <alternativeName>
        <fullName evidence="2">30S ribosomal protein S3Ae</fullName>
    </alternativeName>
    <alternativeName>
        <fullName evidence="1">Ribosomal protein S1e</fullName>
    </alternativeName>
</protein>
<feature type="chain" id="PRO_1000205387" description="Small ribosomal subunit protein eS1">
    <location>
        <begin position="1"/>
        <end position="200"/>
    </location>
</feature>
<reference key="1">
    <citation type="journal article" date="2009" name="Appl. Environ. Microbiol.">
        <title>Metabolic versatility and indigenous origin of the archaeon Thermococcus sibiricus, isolated from a siberian oil reservoir, as revealed by genome analysis.</title>
        <authorList>
            <person name="Mardanov A.V."/>
            <person name="Ravin N.V."/>
            <person name="Svetlitchnyi V.A."/>
            <person name="Beletsky A.V."/>
            <person name="Miroshnichenko M.L."/>
            <person name="Bonch-Osmolovskaya E.A."/>
            <person name="Skryabin K.G."/>
        </authorList>
    </citation>
    <scope>NUCLEOTIDE SEQUENCE [LARGE SCALE GENOMIC DNA]</scope>
    <source>
        <strain>DSM 12597 / MM 739</strain>
    </source>
</reference>